<organism>
    <name type="scientific">Cryptococcus neoformans var. neoformans serotype D (strain JEC21 / ATCC MYA-565)</name>
    <name type="common">Filobasidiella neoformans</name>
    <dbReference type="NCBI Taxonomy" id="214684"/>
    <lineage>
        <taxon>Eukaryota</taxon>
        <taxon>Fungi</taxon>
        <taxon>Dikarya</taxon>
        <taxon>Basidiomycota</taxon>
        <taxon>Agaricomycotina</taxon>
        <taxon>Tremellomycetes</taxon>
        <taxon>Tremellales</taxon>
        <taxon>Cryptococcaceae</taxon>
        <taxon>Cryptococcus</taxon>
        <taxon>Cryptococcus neoformans species complex</taxon>
    </lineage>
</organism>
<gene>
    <name type="primary">DBP3</name>
    <name type="ordered locus">CNE00590</name>
</gene>
<protein>
    <recommendedName>
        <fullName>ATP-dependent RNA helicase DBP3</fullName>
        <ecNumber>3.6.4.13</ecNumber>
    </recommendedName>
</protein>
<accession>P0CQ78</accession>
<accession>Q55SY3</accession>
<accession>Q5KHB7</accession>
<keyword id="KW-0067">ATP-binding</keyword>
<keyword id="KW-0347">Helicase</keyword>
<keyword id="KW-0378">Hydrolase</keyword>
<keyword id="KW-0547">Nucleotide-binding</keyword>
<keyword id="KW-0539">Nucleus</keyword>
<keyword id="KW-1185">Reference proteome</keyword>
<keyword id="KW-0690">Ribosome biogenesis</keyword>
<keyword id="KW-0694">RNA-binding</keyword>
<keyword id="KW-0698">rRNA processing</keyword>
<comment type="function">
    <text evidence="1">ATP-dependent RNA helicase required for 60S ribosomal subunit synthesis. Involved in efficient pre-rRNA processing, predominantly at site A3, which is necessary for the normal formation of 25S and 5.8S rRNAs (By similarity).</text>
</comment>
<comment type="catalytic activity">
    <reaction>
        <text>ATP + H2O = ADP + phosphate + H(+)</text>
        <dbReference type="Rhea" id="RHEA:13065"/>
        <dbReference type="ChEBI" id="CHEBI:15377"/>
        <dbReference type="ChEBI" id="CHEBI:15378"/>
        <dbReference type="ChEBI" id="CHEBI:30616"/>
        <dbReference type="ChEBI" id="CHEBI:43474"/>
        <dbReference type="ChEBI" id="CHEBI:456216"/>
        <dbReference type="EC" id="3.6.4.13"/>
    </reaction>
</comment>
<comment type="subcellular location">
    <subcellularLocation>
        <location evidence="1">Nucleus</location>
        <location evidence="1">Nucleolus</location>
    </subcellularLocation>
</comment>
<comment type="domain">
    <text>The Q motif is unique to and characteristic of the DEAD box family of RNA helicases and controls ATP binding and hydrolysis.</text>
</comment>
<comment type="similarity">
    <text evidence="5">Belongs to the DEAD box helicase family. DDX5/DBP2 subfamily.</text>
</comment>
<proteinExistence type="inferred from homology"/>
<dbReference type="EC" id="3.6.4.13"/>
<dbReference type="EMBL" id="AE017345">
    <property type="protein sequence ID" value="AAW43858.1"/>
    <property type="molecule type" value="Genomic_DNA"/>
</dbReference>
<dbReference type="RefSeq" id="XP_571165.1">
    <property type="nucleotide sequence ID" value="XM_571165.1"/>
</dbReference>
<dbReference type="SMR" id="P0CQ78"/>
<dbReference type="FunCoup" id="P0CQ78">
    <property type="interactions" value="191"/>
</dbReference>
<dbReference type="STRING" id="214684.P0CQ78"/>
<dbReference type="PaxDb" id="214684-P0CQ78"/>
<dbReference type="EnsemblFungi" id="AAW43858">
    <property type="protein sequence ID" value="AAW43858"/>
    <property type="gene ID" value="CNE00590"/>
</dbReference>
<dbReference type="GeneID" id="3257801"/>
<dbReference type="KEGG" id="cne:CNE00590"/>
<dbReference type="VEuPathDB" id="FungiDB:CNE00590"/>
<dbReference type="eggNOG" id="KOG0331">
    <property type="taxonomic scope" value="Eukaryota"/>
</dbReference>
<dbReference type="HOGENOM" id="CLU_003041_1_5_1"/>
<dbReference type="InParanoid" id="P0CQ78"/>
<dbReference type="OMA" id="KKTHDMY"/>
<dbReference type="OrthoDB" id="196131at2759"/>
<dbReference type="Proteomes" id="UP000002149">
    <property type="component" value="Chromosome 5"/>
</dbReference>
<dbReference type="GO" id="GO:0005730">
    <property type="term" value="C:nucleolus"/>
    <property type="evidence" value="ECO:0000318"/>
    <property type="project" value="GO_Central"/>
</dbReference>
<dbReference type="GO" id="GO:0030687">
    <property type="term" value="C:preribosome, large subunit precursor"/>
    <property type="evidence" value="ECO:0007669"/>
    <property type="project" value="EnsemblFungi"/>
</dbReference>
<dbReference type="GO" id="GO:0005524">
    <property type="term" value="F:ATP binding"/>
    <property type="evidence" value="ECO:0007669"/>
    <property type="project" value="UniProtKB-KW"/>
</dbReference>
<dbReference type="GO" id="GO:0016887">
    <property type="term" value="F:ATP hydrolysis activity"/>
    <property type="evidence" value="ECO:0007669"/>
    <property type="project" value="RHEA"/>
</dbReference>
<dbReference type="GO" id="GO:0003729">
    <property type="term" value="F:mRNA binding"/>
    <property type="evidence" value="ECO:0000318"/>
    <property type="project" value="GO_Central"/>
</dbReference>
<dbReference type="GO" id="GO:0003724">
    <property type="term" value="F:RNA helicase activity"/>
    <property type="evidence" value="ECO:0000318"/>
    <property type="project" value="GO_Central"/>
</dbReference>
<dbReference type="GO" id="GO:0000464">
    <property type="term" value="P:endonucleolytic cleavage in ITS1 upstream of 5.8S rRNA from tricistronic rRNA transcript (SSU-rRNA, 5.8S rRNA, LSU-rRNA)"/>
    <property type="evidence" value="ECO:0007669"/>
    <property type="project" value="EnsemblFungi"/>
</dbReference>
<dbReference type="GO" id="GO:0006364">
    <property type="term" value="P:rRNA processing"/>
    <property type="evidence" value="ECO:0000318"/>
    <property type="project" value="GO_Central"/>
</dbReference>
<dbReference type="CDD" id="cd00268">
    <property type="entry name" value="DEADc"/>
    <property type="match status" value="1"/>
</dbReference>
<dbReference type="CDD" id="cd18787">
    <property type="entry name" value="SF2_C_DEAD"/>
    <property type="match status" value="1"/>
</dbReference>
<dbReference type="Gene3D" id="3.40.50.300">
    <property type="entry name" value="P-loop containing nucleotide triphosphate hydrolases"/>
    <property type="match status" value="2"/>
</dbReference>
<dbReference type="InterPro" id="IPR011545">
    <property type="entry name" value="DEAD/DEAH_box_helicase_dom"/>
</dbReference>
<dbReference type="InterPro" id="IPR014001">
    <property type="entry name" value="Helicase_ATP-bd"/>
</dbReference>
<dbReference type="InterPro" id="IPR001650">
    <property type="entry name" value="Helicase_C-like"/>
</dbReference>
<dbReference type="InterPro" id="IPR027417">
    <property type="entry name" value="P-loop_NTPase"/>
</dbReference>
<dbReference type="InterPro" id="IPR000629">
    <property type="entry name" value="RNA-helicase_DEAD-box_CS"/>
</dbReference>
<dbReference type="PANTHER" id="PTHR47958">
    <property type="entry name" value="ATP-DEPENDENT RNA HELICASE DBP3"/>
    <property type="match status" value="1"/>
</dbReference>
<dbReference type="Pfam" id="PF00270">
    <property type="entry name" value="DEAD"/>
    <property type="match status" value="1"/>
</dbReference>
<dbReference type="Pfam" id="PF00271">
    <property type="entry name" value="Helicase_C"/>
    <property type="match status" value="1"/>
</dbReference>
<dbReference type="SMART" id="SM00487">
    <property type="entry name" value="DEXDc"/>
    <property type="match status" value="1"/>
</dbReference>
<dbReference type="SMART" id="SM00490">
    <property type="entry name" value="HELICc"/>
    <property type="match status" value="1"/>
</dbReference>
<dbReference type="SUPFAM" id="SSF52540">
    <property type="entry name" value="P-loop containing nucleoside triphosphate hydrolases"/>
    <property type="match status" value="1"/>
</dbReference>
<dbReference type="PROSITE" id="PS00039">
    <property type="entry name" value="DEAD_ATP_HELICASE"/>
    <property type="match status" value="1"/>
</dbReference>
<dbReference type="PROSITE" id="PS51192">
    <property type="entry name" value="HELICASE_ATP_BIND_1"/>
    <property type="match status" value="1"/>
</dbReference>
<dbReference type="PROSITE" id="PS51194">
    <property type="entry name" value="HELICASE_CTER"/>
    <property type="match status" value="1"/>
</dbReference>
<dbReference type="PROSITE" id="PS51195">
    <property type="entry name" value="Q_MOTIF"/>
    <property type="match status" value="1"/>
</dbReference>
<name>DBP3_CRYNJ</name>
<reference key="1">
    <citation type="journal article" date="2005" name="Science">
        <title>The genome of the basidiomycetous yeast and human pathogen Cryptococcus neoformans.</title>
        <authorList>
            <person name="Loftus B.J."/>
            <person name="Fung E."/>
            <person name="Roncaglia P."/>
            <person name="Rowley D."/>
            <person name="Amedeo P."/>
            <person name="Bruno D."/>
            <person name="Vamathevan J."/>
            <person name="Miranda M."/>
            <person name="Anderson I.J."/>
            <person name="Fraser J.A."/>
            <person name="Allen J.E."/>
            <person name="Bosdet I.E."/>
            <person name="Brent M.R."/>
            <person name="Chiu R."/>
            <person name="Doering T.L."/>
            <person name="Donlin M.J."/>
            <person name="D'Souza C.A."/>
            <person name="Fox D.S."/>
            <person name="Grinberg V."/>
            <person name="Fu J."/>
            <person name="Fukushima M."/>
            <person name="Haas B.J."/>
            <person name="Huang J.C."/>
            <person name="Janbon G."/>
            <person name="Jones S.J.M."/>
            <person name="Koo H.L."/>
            <person name="Krzywinski M.I."/>
            <person name="Kwon-Chung K.J."/>
            <person name="Lengeler K.B."/>
            <person name="Maiti R."/>
            <person name="Marra M.A."/>
            <person name="Marra R.E."/>
            <person name="Mathewson C.A."/>
            <person name="Mitchell T.G."/>
            <person name="Pertea M."/>
            <person name="Riggs F.R."/>
            <person name="Salzberg S.L."/>
            <person name="Schein J.E."/>
            <person name="Shvartsbeyn A."/>
            <person name="Shin H."/>
            <person name="Shumway M."/>
            <person name="Specht C.A."/>
            <person name="Suh B.B."/>
            <person name="Tenney A."/>
            <person name="Utterback T.R."/>
            <person name="Wickes B.L."/>
            <person name="Wortman J.R."/>
            <person name="Wye N.H."/>
            <person name="Kronstad J.W."/>
            <person name="Lodge J.K."/>
            <person name="Heitman J."/>
            <person name="Davis R.W."/>
            <person name="Fraser C.M."/>
            <person name="Hyman R.W."/>
        </authorList>
    </citation>
    <scope>NUCLEOTIDE SEQUENCE [LARGE SCALE GENOMIC DNA]</scope>
    <source>
        <strain>JEC21 / ATCC MYA-565</strain>
    </source>
</reference>
<sequence length="605" mass="65986">MSAEELVASPKLSKEEKKARKEAKKLKKAEKAAKEAAAQEGVATEEVKEEVRKKDKKDKKEKKDKKRKEVDQEEAESPSTSTAATEEPPKKKKKSKDADSSETPVSTATPTESETPALSKKQQKKLAKASAAAAATSSAAAIPAPTVPTTFTAEHNTFLTSNNITLTPSLFPPLLSIRDLPINSKLQPFLNKFEKPTPIQACSWPALLSKKDVVGIAETGSGKTLAFGVPGINLLSQLPPVTGSKKGRGQVPGQIQMLVLAPTRELAQQSHEHLSAFGEQVGLKSVCIFGGVGKDGQARELSQKDTRVVVGTPGRTLDLADSGELDLSSVSYLVLDEADRMLDAGFENDIRRIIAHTPGHKEGRQTVMFSATWPESVRRLASTFLNNPLRITVGSDELSANKRIEQIVEVLDNPRDKDFRLTHHLKAHLKVHPNSKTSPTRILVFALYKKEAQRLEYTIRRAGYAVGALHGDMTQEARFKALEAFKTGQQNVLVATDVAARGLDIPDVGLVINVTFPLTTEDFVHRCGRTGRAGKTGKAVTFFTGENHEKSLAGEFMRVLRDVGAEIPKEMDRFPTTIKKKEHGSYGAFYKETTNAPAPTKITFD</sequence>
<feature type="chain" id="PRO_0000232176" description="ATP-dependent RNA helicase DBP3">
    <location>
        <begin position="1"/>
        <end position="605"/>
    </location>
</feature>
<feature type="domain" description="Helicase ATP-binding" evidence="2">
    <location>
        <begin position="204"/>
        <end position="391"/>
    </location>
</feature>
<feature type="domain" description="Helicase C-terminal" evidence="3">
    <location>
        <begin position="424"/>
        <end position="575"/>
    </location>
</feature>
<feature type="region of interest" description="Disordered" evidence="4">
    <location>
        <begin position="1"/>
        <end position="124"/>
    </location>
</feature>
<feature type="short sequence motif" description="Q motif">
    <location>
        <begin position="175"/>
        <end position="201"/>
    </location>
</feature>
<feature type="short sequence motif" description="DEAD box">
    <location>
        <begin position="336"/>
        <end position="339"/>
    </location>
</feature>
<feature type="compositionally biased region" description="Basic residues" evidence="4">
    <location>
        <begin position="54"/>
        <end position="66"/>
    </location>
</feature>
<feature type="compositionally biased region" description="Polar residues" evidence="4">
    <location>
        <begin position="104"/>
        <end position="114"/>
    </location>
</feature>
<feature type="binding site" evidence="2">
    <location>
        <begin position="217"/>
        <end position="224"/>
    </location>
    <ligand>
        <name>ATP</name>
        <dbReference type="ChEBI" id="CHEBI:30616"/>
    </ligand>
</feature>
<evidence type="ECO:0000250" key="1"/>
<evidence type="ECO:0000255" key="2">
    <source>
        <dbReference type="PROSITE-ProRule" id="PRU00541"/>
    </source>
</evidence>
<evidence type="ECO:0000255" key="3">
    <source>
        <dbReference type="PROSITE-ProRule" id="PRU00542"/>
    </source>
</evidence>
<evidence type="ECO:0000256" key="4">
    <source>
        <dbReference type="SAM" id="MobiDB-lite"/>
    </source>
</evidence>
<evidence type="ECO:0000305" key="5"/>